<sequence length="251" mass="26868">MRKPIIAGNWKMNKTIGEAVDFVEAVKANVPAQATVDSVVCAPALFLDRLLQAVKGTELKIGAQTMHFEDNGAFTGEISPKALSDMGVHYVIIGHSERREMFAETDETVNKKVHAAFAHHLVPIMCCGETAEEREAGKMEAVVKEQVENGLAGLSEEQVKQTVIAYEPIWAIGTGKSATEKDANEACAYVRQTVAANFSEEAAEAIRIQYGGSVKPGNIKDYMAQPDIDGALVGGASLDADSFLELVGAAK</sequence>
<accession>Q5WDK7</accession>
<reference key="1">
    <citation type="submission" date="2003-10" db="EMBL/GenBank/DDBJ databases">
        <title>The complete genome sequence of the alkaliphilic Bacillus clausii KSM-K16.</title>
        <authorList>
            <person name="Takaki Y."/>
            <person name="Kageyama Y."/>
            <person name="Shimamura S."/>
            <person name="Suzuki H."/>
            <person name="Nishi S."/>
            <person name="Hatada Y."/>
            <person name="Kawai S."/>
            <person name="Ito S."/>
            <person name="Horikoshi K."/>
        </authorList>
    </citation>
    <scope>NUCLEOTIDE SEQUENCE [LARGE SCALE GENOMIC DNA]</scope>
    <source>
        <strain>KSM-K16</strain>
    </source>
</reference>
<name>TPIS_SHOC1</name>
<evidence type="ECO:0000255" key="1">
    <source>
        <dbReference type="HAMAP-Rule" id="MF_00147"/>
    </source>
</evidence>
<dbReference type="EC" id="5.3.1.1" evidence="1"/>
<dbReference type="EMBL" id="AP006627">
    <property type="protein sequence ID" value="BAD65553.1"/>
    <property type="molecule type" value="Genomic_DNA"/>
</dbReference>
<dbReference type="RefSeq" id="WP_011247861.1">
    <property type="nucleotide sequence ID" value="NC_006582.1"/>
</dbReference>
<dbReference type="SMR" id="Q5WDK7"/>
<dbReference type="STRING" id="66692.ABC3019"/>
<dbReference type="KEGG" id="bcl:ABC3019"/>
<dbReference type="eggNOG" id="COG0149">
    <property type="taxonomic scope" value="Bacteria"/>
</dbReference>
<dbReference type="HOGENOM" id="CLU_024251_2_3_9"/>
<dbReference type="OrthoDB" id="9809429at2"/>
<dbReference type="UniPathway" id="UPA00109">
    <property type="reaction ID" value="UER00189"/>
</dbReference>
<dbReference type="UniPathway" id="UPA00138"/>
<dbReference type="Proteomes" id="UP000001168">
    <property type="component" value="Chromosome"/>
</dbReference>
<dbReference type="GO" id="GO:0005829">
    <property type="term" value="C:cytosol"/>
    <property type="evidence" value="ECO:0007669"/>
    <property type="project" value="TreeGrafter"/>
</dbReference>
<dbReference type="GO" id="GO:0004807">
    <property type="term" value="F:triose-phosphate isomerase activity"/>
    <property type="evidence" value="ECO:0007669"/>
    <property type="project" value="UniProtKB-UniRule"/>
</dbReference>
<dbReference type="GO" id="GO:0006094">
    <property type="term" value="P:gluconeogenesis"/>
    <property type="evidence" value="ECO:0007669"/>
    <property type="project" value="UniProtKB-UniRule"/>
</dbReference>
<dbReference type="GO" id="GO:0046166">
    <property type="term" value="P:glyceraldehyde-3-phosphate biosynthetic process"/>
    <property type="evidence" value="ECO:0007669"/>
    <property type="project" value="TreeGrafter"/>
</dbReference>
<dbReference type="GO" id="GO:0019563">
    <property type="term" value="P:glycerol catabolic process"/>
    <property type="evidence" value="ECO:0007669"/>
    <property type="project" value="TreeGrafter"/>
</dbReference>
<dbReference type="GO" id="GO:0006096">
    <property type="term" value="P:glycolytic process"/>
    <property type="evidence" value="ECO:0007669"/>
    <property type="project" value="UniProtKB-UniRule"/>
</dbReference>
<dbReference type="CDD" id="cd00311">
    <property type="entry name" value="TIM"/>
    <property type="match status" value="1"/>
</dbReference>
<dbReference type="FunFam" id="3.20.20.70:FF:000016">
    <property type="entry name" value="Triosephosphate isomerase"/>
    <property type="match status" value="1"/>
</dbReference>
<dbReference type="Gene3D" id="3.20.20.70">
    <property type="entry name" value="Aldolase class I"/>
    <property type="match status" value="1"/>
</dbReference>
<dbReference type="HAMAP" id="MF_00147_B">
    <property type="entry name" value="TIM_B"/>
    <property type="match status" value="1"/>
</dbReference>
<dbReference type="InterPro" id="IPR013785">
    <property type="entry name" value="Aldolase_TIM"/>
</dbReference>
<dbReference type="InterPro" id="IPR035990">
    <property type="entry name" value="TIM_sf"/>
</dbReference>
<dbReference type="InterPro" id="IPR022896">
    <property type="entry name" value="TrioseP_Isoase_bac/euk"/>
</dbReference>
<dbReference type="InterPro" id="IPR000652">
    <property type="entry name" value="Triosephosphate_isomerase"/>
</dbReference>
<dbReference type="InterPro" id="IPR020861">
    <property type="entry name" value="Triosephosphate_isomerase_AS"/>
</dbReference>
<dbReference type="NCBIfam" id="TIGR00419">
    <property type="entry name" value="tim"/>
    <property type="match status" value="1"/>
</dbReference>
<dbReference type="PANTHER" id="PTHR21139">
    <property type="entry name" value="TRIOSEPHOSPHATE ISOMERASE"/>
    <property type="match status" value="1"/>
</dbReference>
<dbReference type="PANTHER" id="PTHR21139:SF42">
    <property type="entry name" value="TRIOSEPHOSPHATE ISOMERASE"/>
    <property type="match status" value="1"/>
</dbReference>
<dbReference type="Pfam" id="PF00121">
    <property type="entry name" value="TIM"/>
    <property type="match status" value="1"/>
</dbReference>
<dbReference type="SUPFAM" id="SSF51351">
    <property type="entry name" value="Triosephosphate isomerase (TIM)"/>
    <property type="match status" value="1"/>
</dbReference>
<dbReference type="PROSITE" id="PS00171">
    <property type="entry name" value="TIM_1"/>
    <property type="match status" value="1"/>
</dbReference>
<dbReference type="PROSITE" id="PS51440">
    <property type="entry name" value="TIM_2"/>
    <property type="match status" value="1"/>
</dbReference>
<feature type="chain" id="PRO_0000307427" description="Triosephosphate isomerase">
    <location>
        <begin position="1"/>
        <end position="251"/>
    </location>
</feature>
<feature type="active site" description="Electrophile" evidence="1">
    <location>
        <position position="95"/>
    </location>
</feature>
<feature type="active site" description="Proton acceptor" evidence="1">
    <location>
        <position position="167"/>
    </location>
</feature>
<feature type="binding site" evidence="1">
    <location>
        <begin position="9"/>
        <end position="11"/>
    </location>
    <ligand>
        <name>substrate</name>
    </ligand>
</feature>
<feature type="binding site" evidence="1">
    <location>
        <position position="173"/>
    </location>
    <ligand>
        <name>substrate</name>
    </ligand>
</feature>
<feature type="binding site" evidence="1">
    <location>
        <position position="213"/>
    </location>
    <ligand>
        <name>substrate</name>
    </ligand>
</feature>
<feature type="binding site" evidence="1">
    <location>
        <begin position="234"/>
        <end position="235"/>
    </location>
    <ligand>
        <name>substrate</name>
    </ligand>
</feature>
<feature type="modified residue" description="Phosphoserine" evidence="1">
    <location>
        <position position="213"/>
    </location>
</feature>
<comment type="function">
    <text evidence="1">Involved in the gluconeogenesis. Catalyzes stereospecifically the conversion of dihydroxyacetone phosphate (DHAP) to D-glyceraldehyde-3-phosphate (G3P).</text>
</comment>
<comment type="catalytic activity">
    <reaction evidence="1">
        <text>D-glyceraldehyde 3-phosphate = dihydroxyacetone phosphate</text>
        <dbReference type="Rhea" id="RHEA:18585"/>
        <dbReference type="ChEBI" id="CHEBI:57642"/>
        <dbReference type="ChEBI" id="CHEBI:59776"/>
        <dbReference type="EC" id="5.3.1.1"/>
    </reaction>
</comment>
<comment type="pathway">
    <text evidence="1">Carbohydrate biosynthesis; gluconeogenesis.</text>
</comment>
<comment type="pathway">
    <text evidence="1">Carbohydrate degradation; glycolysis; D-glyceraldehyde 3-phosphate from glycerone phosphate: step 1/1.</text>
</comment>
<comment type="subunit">
    <text evidence="1">Homodimer.</text>
</comment>
<comment type="subcellular location">
    <subcellularLocation>
        <location evidence="1">Cytoplasm</location>
    </subcellularLocation>
</comment>
<comment type="similarity">
    <text evidence="1">Belongs to the triosephosphate isomerase family.</text>
</comment>
<keyword id="KW-0963">Cytoplasm</keyword>
<keyword id="KW-0312">Gluconeogenesis</keyword>
<keyword id="KW-0324">Glycolysis</keyword>
<keyword id="KW-0413">Isomerase</keyword>
<keyword id="KW-0597">Phosphoprotein</keyword>
<keyword id="KW-1185">Reference proteome</keyword>
<gene>
    <name evidence="1" type="primary">tpiA</name>
    <name type="ordered locus">ABC3019</name>
</gene>
<protein>
    <recommendedName>
        <fullName evidence="1">Triosephosphate isomerase</fullName>
        <shortName evidence="1">TIM</shortName>
        <shortName evidence="1">TPI</shortName>
        <ecNumber evidence="1">5.3.1.1</ecNumber>
    </recommendedName>
    <alternativeName>
        <fullName evidence="1">Triose-phosphate isomerase</fullName>
    </alternativeName>
</protein>
<organism>
    <name type="scientific">Shouchella clausii (strain KSM-K16)</name>
    <name type="common">Alkalihalobacillus clausii</name>
    <dbReference type="NCBI Taxonomy" id="66692"/>
    <lineage>
        <taxon>Bacteria</taxon>
        <taxon>Bacillati</taxon>
        <taxon>Bacillota</taxon>
        <taxon>Bacilli</taxon>
        <taxon>Bacillales</taxon>
        <taxon>Bacillaceae</taxon>
        <taxon>Shouchella</taxon>
    </lineage>
</organism>
<proteinExistence type="inferred from homology"/>